<sequence length="288" mass="31613">MSQFSFTKMHGLGNSYIYVNMFEEQIPEEDLALVAEKVSNINTGIGADGMILICPSDVAPVKMRMFNNDGSEGKSCGNGLRCVAKYAYEHKLVEDTVFTIETLAGIVTAEVTVEEGKVTLAKIDMGAPRLTRAEIPMLGEGETPFIRENFLYNNHRYAFTAVSMGNPHAVIFVDDVEQAPLTTLGPVLETHEMFPERVNVEFIEILNEEEMNFRVWERGSGVTQACGTGACAAVVASILNGKMERGKEITVHLAGGDLMIAWTEEGNVLMKGPAEVICRGVYEYKIEA</sequence>
<proteinExistence type="evidence at protein level"/>
<name>DAPF_BACAN</name>
<dbReference type="EC" id="5.1.1.7" evidence="1"/>
<dbReference type="EMBL" id="AE016879">
    <property type="protein sequence ID" value="AAP28840.1"/>
    <property type="molecule type" value="Genomic_DNA"/>
</dbReference>
<dbReference type="EMBL" id="AE017225">
    <property type="protein sequence ID" value="AAT57099.1"/>
    <property type="molecule type" value="Genomic_DNA"/>
</dbReference>
<dbReference type="EMBL" id="AE017334">
    <property type="protein sequence ID" value="AAT70160.1"/>
    <property type="molecule type" value="Genomic_DNA"/>
</dbReference>
<dbReference type="RefSeq" id="NP_847354.1">
    <property type="nucleotide sequence ID" value="NC_003997.3"/>
</dbReference>
<dbReference type="RefSeq" id="WP_000077386.1">
    <property type="nucleotide sequence ID" value="NZ_WXXJ01000017.1"/>
</dbReference>
<dbReference type="RefSeq" id="YP_031049.1">
    <property type="nucleotide sequence ID" value="NC_005945.1"/>
</dbReference>
<dbReference type="PDB" id="2OTN">
    <property type="method" value="X-ray"/>
    <property type="resolution" value="2.40 A"/>
    <property type="chains" value="A/B=1-288"/>
</dbReference>
<dbReference type="PDBsum" id="2OTN"/>
<dbReference type="SMR" id="Q81XR2"/>
<dbReference type="IntAct" id="Q81XR2">
    <property type="interactions" value="3"/>
</dbReference>
<dbReference type="STRING" id="261594.GBAA_5170"/>
<dbReference type="DNASU" id="1084119"/>
<dbReference type="GeneID" id="93006147"/>
<dbReference type="KEGG" id="ban:BA_5170"/>
<dbReference type="KEGG" id="bar:GBAA_5170"/>
<dbReference type="KEGG" id="bat:BAS4806"/>
<dbReference type="PATRIC" id="fig|198094.11.peg.5132"/>
<dbReference type="eggNOG" id="COG0253">
    <property type="taxonomic scope" value="Bacteria"/>
</dbReference>
<dbReference type="HOGENOM" id="CLU_053306_3_0_9"/>
<dbReference type="OMA" id="GIRCFAR"/>
<dbReference type="OrthoDB" id="9805408at2"/>
<dbReference type="UniPathway" id="UPA00034">
    <property type="reaction ID" value="UER00025"/>
</dbReference>
<dbReference type="EvolutionaryTrace" id="Q81XR2"/>
<dbReference type="Proteomes" id="UP000000427">
    <property type="component" value="Chromosome"/>
</dbReference>
<dbReference type="Proteomes" id="UP000000594">
    <property type="component" value="Chromosome"/>
</dbReference>
<dbReference type="GO" id="GO:0005829">
    <property type="term" value="C:cytosol"/>
    <property type="evidence" value="ECO:0007669"/>
    <property type="project" value="TreeGrafter"/>
</dbReference>
<dbReference type="GO" id="GO:0008837">
    <property type="term" value="F:diaminopimelate epimerase activity"/>
    <property type="evidence" value="ECO:0007669"/>
    <property type="project" value="UniProtKB-UniRule"/>
</dbReference>
<dbReference type="GO" id="GO:0009089">
    <property type="term" value="P:lysine biosynthetic process via diaminopimelate"/>
    <property type="evidence" value="ECO:0007669"/>
    <property type="project" value="UniProtKB-UniRule"/>
</dbReference>
<dbReference type="FunFam" id="3.10.310.10:FF:000004">
    <property type="entry name" value="Diaminopimelate epimerase"/>
    <property type="match status" value="1"/>
</dbReference>
<dbReference type="FunFam" id="3.10.310.10:FF:000006">
    <property type="entry name" value="Diaminopimelate epimerase"/>
    <property type="match status" value="1"/>
</dbReference>
<dbReference type="Gene3D" id="3.10.310.10">
    <property type="entry name" value="Diaminopimelate Epimerase, Chain A, domain 1"/>
    <property type="match status" value="2"/>
</dbReference>
<dbReference type="HAMAP" id="MF_00197">
    <property type="entry name" value="DAP_epimerase"/>
    <property type="match status" value="1"/>
</dbReference>
<dbReference type="InterPro" id="IPR018510">
    <property type="entry name" value="DAP_epimerase_AS"/>
</dbReference>
<dbReference type="InterPro" id="IPR001653">
    <property type="entry name" value="DAP_epimerase_DapF"/>
</dbReference>
<dbReference type="NCBIfam" id="TIGR00652">
    <property type="entry name" value="DapF"/>
    <property type="match status" value="1"/>
</dbReference>
<dbReference type="PANTHER" id="PTHR31689:SF0">
    <property type="entry name" value="DIAMINOPIMELATE EPIMERASE"/>
    <property type="match status" value="1"/>
</dbReference>
<dbReference type="PANTHER" id="PTHR31689">
    <property type="entry name" value="DIAMINOPIMELATE EPIMERASE, CHLOROPLASTIC"/>
    <property type="match status" value="1"/>
</dbReference>
<dbReference type="Pfam" id="PF01678">
    <property type="entry name" value="DAP_epimerase"/>
    <property type="match status" value="2"/>
</dbReference>
<dbReference type="SUPFAM" id="SSF54506">
    <property type="entry name" value="Diaminopimelate epimerase-like"/>
    <property type="match status" value="1"/>
</dbReference>
<dbReference type="PROSITE" id="PS01326">
    <property type="entry name" value="DAP_EPIMERASE"/>
    <property type="match status" value="1"/>
</dbReference>
<organism>
    <name type="scientific">Bacillus anthracis</name>
    <dbReference type="NCBI Taxonomy" id="1392"/>
    <lineage>
        <taxon>Bacteria</taxon>
        <taxon>Bacillati</taxon>
        <taxon>Bacillota</taxon>
        <taxon>Bacilli</taxon>
        <taxon>Bacillales</taxon>
        <taxon>Bacillaceae</taxon>
        <taxon>Bacillus</taxon>
        <taxon>Bacillus cereus group</taxon>
    </lineage>
</organism>
<protein>
    <recommendedName>
        <fullName evidence="1">Diaminopimelate epimerase</fullName>
        <shortName evidence="1">DAP epimerase</shortName>
        <ecNumber evidence="1">5.1.1.7</ecNumber>
    </recommendedName>
    <alternativeName>
        <fullName evidence="1">PLP-independent amino acid racemase</fullName>
    </alternativeName>
</protein>
<feature type="chain" id="PRO_1000011837" description="Diaminopimelate epimerase">
    <location>
        <begin position="1"/>
        <end position="288"/>
    </location>
</feature>
<feature type="active site" description="Proton donor" evidence="1">
    <location>
        <position position="76"/>
    </location>
</feature>
<feature type="active site" description="Proton acceptor" evidence="1">
    <location>
        <position position="226"/>
    </location>
</feature>
<feature type="binding site" evidence="1">
    <location>
        <position position="14"/>
    </location>
    <ligand>
        <name>substrate</name>
    </ligand>
</feature>
<feature type="binding site" evidence="1">
    <location>
        <position position="67"/>
    </location>
    <ligand>
        <name>substrate</name>
    </ligand>
</feature>
<feature type="binding site" evidence="1">
    <location>
        <begin position="77"/>
        <end position="78"/>
    </location>
    <ligand>
        <name>substrate</name>
    </ligand>
</feature>
<feature type="binding site" evidence="1">
    <location>
        <position position="166"/>
    </location>
    <ligand>
        <name>substrate</name>
    </ligand>
</feature>
<feature type="binding site" evidence="1">
    <location>
        <position position="199"/>
    </location>
    <ligand>
        <name>substrate</name>
    </ligand>
</feature>
<feature type="binding site" evidence="1">
    <location>
        <begin position="217"/>
        <end position="218"/>
    </location>
    <ligand>
        <name>substrate</name>
    </ligand>
</feature>
<feature type="binding site" evidence="1">
    <location>
        <begin position="227"/>
        <end position="228"/>
    </location>
    <ligand>
        <name>substrate</name>
    </ligand>
</feature>
<feature type="site" description="Could be important to modulate the pK values of the two catalytic cysteine residues" evidence="1">
    <location>
        <position position="168"/>
    </location>
</feature>
<feature type="site" description="Could be important to modulate the pK values of the two catalytic cysteine residues" evidence="1">
    <location>
        <position position="217"/>
    </location>
</feature>
<feature type="strand" evidence="3">
    <location>
        <begin position="1"/>
        <end position="11"/>
    </location>
</feature>
<feature type="strand" evidence="3">
    <location>
        <begin position="14"/>
        <end position="20"/>
    </location>
</feature>
<feature type="turn" evidence="3">
    <location>
        <begin position="21"/>
        <end position="23"/>
    </location>
</feature>
<feature type="helix" evidence="3">
    <location>
        <begin position="28"/>
        <end position="30"/>
    </location>
</feature>
<feature type="helix" evidence="3">
    <location>
        <begin position="31"/>
        <end position="39"/>
    </location>
</feature>
<feature type="turn" evidence="3">
    <location>
        <begin position="41"/>
        <end position="43"/>
    </location>
</feature>
<feature type="strand" evidence="3">
    <location>
        <begin position="48"/>
        <end position="54"/>
    </location>
</feature>
<feature type="strand" evidence="3">
    <location>
        <begin position="57"/>
        <end position="67"/>
    </location>
</feature>
<feature type="turn" evidence="3">
    <location>
        <begin position="76"/>
        <end position="79"/>
    </location>
</feature>
<feature type="helix" evidence="3">
    <location>
        <begin position="80"/>
        <end position="89"/>
    </location>
</feature>
<feature type="strand" evidence="3">
    <location>
        <begin position="94"/>
        <end position="102"/>
    </location>
</feature>
<feature type="strand" evidence="3">
    <location>
        <begin position="105"/>
        <end position="126"/>
    </location>
</feature>
<feature type="helix" evidence="3">
    <location>
        <begin position="132"/>
        <end position="134"/>
    </location>
</feature>
<feature type="strand" evidence="3">
    <location>
        <begin position="143"/>
        <end position="152"/>
    </location>
</feature>
<feature type="strand" evidence="3">
    <location>
        <begin position="155"/>
        <end position="172"/>
    </location>
</feature>
<feature type="helix" evidence="3">
    <location>
        <begin position="176"/>
        <end position="178"/>
    </location>
</feature>
<feature type="turn" evidence="3">
    <location>
        <begin position="181"/>
        <end position="183"/>
    </location>
</feature>
<feature type="helix" evidence="3">
    <location>
        <begin position="184"/>
        <end position="189"/>
    </location>
</feature>
<feature type="strand" evidence="3">
    <location>
        <begin position="199"/>
        <end position="207"/>
    </location>
</feature>
<feature type="strand" evidence="3">
    <location>
        <begin position="210"/>
        <end position="216"/>
    </location>
</feature>
<feature type="strand" evidence="3">
    <location>
        <begin position="218"/>
        <end position="220"/>
    </location>
</feature>
<feature type="helix" evidence="3">
    <location>
        <begin position="227"/>
        <end position="239"/>
    </location>
</feature>
<feature type="strand" evidence="3">
    <location>
        <begin position="249"/>
        <end position="252"/>
    </location>
</feature>
<feature type="strand" evidence="3">
    <location>
        <begin position="257"/>
        <end position="262"/>
    </location>
</feature>
<feature type="strand" evidence="3">
    <location>
        <begin position="268"/>
        <end position="273"/>
    </location>
</feature>
<feature type="strand" evidence="3">
    <location>
        <begin position="275"/>
        <end position="286"/>
    </location>
</feature>
<gene>
    <name evidence="1" type="primary">dapF</name>
    <name type="ordered locus">BA_5170</name>
    <name type="ordered locus">GBAA_5170</name>
    <name type="ordered locus">BAS4806</name>
</gene>
<comment type="function">
    <text evidence="1">Catalyzes the stereoinversion of LL-2,6-diaminopimelate (L,L-DAP) to meso-diaminopimelate (meso-DAP), a precursor of L-lysine and an essential component of the bacterial peptidoglycan.</text>
</comment>
<comment type="catalytic activity">
    <reaction evidence="1">
        <text>(2S,6S)-2,6-diaminopimelate = meso-2,6-diaminopimelate</text>
        <dbReference type="Rhea" id="RHEA:15393"/>
        <dbReference type="ChEBI" id="CHEBI:57609"/>
        <dbReference type="ChEBI" id="CHEBI:57791"/>
        <dbReference type="EC" id="5.1.1.7"/>
    </reaction>
</comment>
<comment type="pathway">
    <text evidence="1">Amino-acid biosynthesis; L-lysine biosynthesis via DAP pathway; DL-2,6-diaminopimelate from LL-2,6-diaminopimelate: step 1/1.</text>
</comment>
<comment type="subunit">
    <text evidence="2">Homodimer.</text>
</comment>
<comment type="subcellular location">
    <subcellularLocation>
        <location evidence="1">Cytoplasm</location>
    </subcellularLocation>
</comment>
<comment type="similarity">
    <text evidence="1">Belongs to the diaminopimelate epimerase family.</text>
</comment>
<reference key="1">
    <citation type="journal article" date="2003" name="Nature">
        <title>The genome sequence of Bacillus anthracis Ames and comparison to closely related bacteria.</title>
        <authorList>
            <person name="Read T.D."/>
            <person name="Peterson S.N."/>
            <person name="Tourasse N.J."/>
            <person name="Baillie L.W."/>
            <person name="Paulsen I.T."/>
            <person name="Nelson K.E."/>
            <person name="Tettelin H."/>
            <person name="Fouts D.E."/>
            <person name="Eisen J.A."/>
            <person name="Gill S.R."/>
            <person name="Holtzapple E.K."/>
            <person name="Okstad O.A."/>
            <person name="Helgason E."/>
            <person name="Rilstone J."/>
            <person name="Wu M."/>
            <person name="Kolonay J.F."/>
            <person name="Beanan M.J."/>
            <person name="Dodson R.J."/>
            <person name="Brinkac L.M."/>
            <person name="Gwinn M.L."/>
            <person name="DeBoy R.T."/>
            <person name="Madpu R."/>
            <person name="Daugherty S.C."/>
            <person name="Durkin A.S."/>
            <person name="Haft D.H."/>
            <person name="Nelson W.C."/>
            <person name="Peterson J.D."/>
            <person name="Pop M."/>
            <person name="Khouri H.M."/>
            <person name="Radune D."/>
            <person name="Benton J.L."/>
            <person name="Mahamoud Y."/>
            <person name="Jiang L."/>
            <person name="Hance I.R."/>
            <person name="Weidman J.F."/>
            <person name="Berry K.J."/>
            <person name="Plaut R.D."/>
            <person name="Wolf A.M."/>
            <person name="Watkins K.L."/>
            <person name="Nierman W.C."/>
            <person name="Hazen A."/>
            <person name="Cline R.T."/>
            <person name="Redmond C."/>
            <person name="Thwaite J.E."/>
            <person name="White O."/>
            <person name="Salzberg S.L."/>
            <person name="Thomason B."/>
            <person name="Friedlander A.M."/>
            <person name="Koehler T.M."/>
            <person name="Hanna P.C."/>
            <person name="Kolstoe A.-B."/>
            <person name="Fraser C.M."/>
        </authorList>
    </citation>
    <scope>NUCLEOTIDE SEQUENCE [LARGE SCALE GENOMIC DNA]</scope>
    <source>
        <strain>Ames / isolate Porton</strain>
    </source>
</reference>
<reference key="2">
    <citation type="journal article" date="2009" name="J. Bacteriol.">
        <title>The complete genome sequence of Bacillus anthracis Ames 'Ancestor'.</title>
        <authorList>
            <person name="Ravel J."/>
            <person name="Jiang L."/>
            <person name="Stanley S.T."/>
            <person name="Wilson M.R."/>
            <person name="Decker R.S."/>
            <person name="Read T.D."/>
            <person name="Worsham P."/>
            <person name="Keim P.S."/>
            <person name="Salzberg S.L."/>
            <person name="Fraser-Liggett C.M."/>
            <person name="Rasko D.A."/>
        </authorList>
    </citation>
    <scope>NUCLEOTIDE SEQUENCE [LARGE SCALE GENOMIC DNA]</scope>
    <source>
        <strain>Ames ancestor</strain>
    </source>
</reference>
<reference key="3">
    <citation type="submission" date="2004-01" db="EMBL/GenBank/DDBJ databases">
        <title>Complete genome sequence of Bacillus anthracis Sterne.</title>
        <authorList>
            <person name="Brettin T.S."/>
            <person name="Bruce D."/>
            <person name="Challacombe J.F."/>
            <person name="Gilna P."/>
            <person name="Han C."/>
            <person name="Hill K."/>
            <person name="Hitchcock P."/>
            <person name="Jackson P."/>
            <person name="Keim P."/>
            <person name="Longmire J."/>
            <person name="Lucas S."/>
            <person name="Okinaka R."/>
            <person name="Richardson P."/>
            <person name="Rubin E."/>
            <person name="Tice H."/>
        </authorList>
    </citation>
    <scope>NUCLEOTIDE SEQUENCE [LARGE SCALE GENOMIC DNA]</scope>
    <source>
        <strain>Sterne</strain>
    </source>
</reference>
<reference key="4">
    <citation type="submission" date="2007-02" db="PDB data bank">
        <title>Crystal structure of the catalytically active form of diamin epimerase from Bacillus anthracis.</title>
        <authorList>
            <person name="Matho M.H."/>
            <person name="Fukuda K."/>
            <person name="Santelli E."/>
            <person name="Jaroszewski L."/>
            <person name="Liddington R.C."/>
            <person name="Roper D."/>
        </authorList>
    </citation>
    <scope>X-RAY CRYSTALLOGRAPHY (2.49 ANGSTROMS)</scope>
    <scope>SUBUNIT</scope>
</reference>
<accession>Q81XR2</accession>
<accession>Q6F086</accession>
<accession>Q6HRI9</accession>
<keyword id="KW-0002">3D-structure</keyword>
<keyword id="KW-0028">Amino-acid biosynthesis</keyword>
<keyword id="KW-0963">Cytoplasm</keyword>
<keyword id="KW-0413">Isomerase</keyword>
<keyword id="KW-0457">Lysine biosynthesis</keyword>
<keyword id="KW-1185">Reference proteome</keyword>
<evidence type="ECO:0000255" key="1">
    <source>
        <dbReference type="HAMAP-Rule" id="MF_00197"/>
    </source>
</evidence>
<evidence type="ECO:0000269" key="2">
    <source ref="4"/>
</evidence>
<evidence type="ECO:0007829" key="3">
    <source>
        <dbReference type="PDB" id="2OTN"/>
    </source>
</evidence>